<keyword id="KW-1185">Reference proteome</keyword>
<keyword id="KW-0687">Ribonucleoprotein</keyword>
<keyword id="KW-0689">Ribosomal protein</keyword>
<keyword id="KW-0694">RNA-binding</keyword>
<keyword id="KW-0699">rRNA-binding</keyword>
<proteinExistence type="inferred from homology"/>
<gene>
    <name evidence="1" type="primary">rplB</name>
    <name type="ordered locus">Lxx20300</name>
</gene>
<name>RL2_LEIXX</name>
<organism>
    <name type="scientific">Leifsonia xyli subsp. xyli (strain CTCB07)</name>
    <dbReference type="NCBI Taxonomy" id="281090"/>
    <lineage>
        <taxon>Bacteria</taxon>
        <taxon>Bacillati</taxon>
        <taxon>Actinomycetota</taxon>
        <taxon>Actinomycetes</taxon>
        <taxon>Micrococcales</taxon>
        <taxon>Microbacteriaceae</taxon>
        <taxon>Leifsonia</taxon>
    </lineage>
</organism>
<dbReference type="EMBL" id="AE016822">
    <property type="protein sequence ID" value="AAT89746.1"/>
    <property type="molecule type" value="Genomic_DNA"/>
</dbReference>
<dbReference type="RefSeq" id="WP_011186732.1">
    <property type="nucleotide sequence ID" value="NC_006087.1"/>
</dbReference>
<dbReference type="SMR" id="Q6ACZ8"/>
<dbReference type="STRING" id="281090.Lxx20300"/>
<dbReference type="KEGG" id="lxx:Lxx20300"/>
<dbReference type="eggNOG" id="COG0090">
    <property type="taxonomic scope" value="Bacteria"/>
</dbReference>
<dbReference type="HOGENOM" id="CLU_036235_2_1_11"/>
<dbReference type="Proteomes" id="UP000001306">
    <property type="component" value="Chromosome"/>
</dbReference>
<dbReference type="GO" id="GO:0015934">
    <property type="term" value="C:large ribosomal subunit"/>
    <property type="evidence" value="ECO:0007669"/>
    <property type="project" value="InterPro"/>
</dbReference>
<dbReference type="GO" id="GO:0019843">
    <property type="term" value="F:rRNA binding"/>
    <property type="evidence" value="ECO:0007669"/>
    <property type="project" value="UniProtKB-UniRule"/>
</dbReference>
<dbReference type="GO" id="GO:0003735">
    <property type="term" value="F:structural constituent of ribosome"/>
    <property type="evidence" value="ECO:0007669"/>
    <property type="project" value="InterPro"/>
</dbReference>
<dbReference type="GO" id="GO:0016740">
    <property type="term" value="F:transferase activity"/>
    <property type="evidence" value="ECO:0007669"/>
    <property type="project" value="InterPro"/>
</dbReference>
<dbReference type="GO" id="GO:0002181">
    <property type="term" value="P:cytoplasmic translation"/>
    <property type="evidence" value="ECO:0007669"/>
    <property type="project" value="TreeGrafter"/>
</dbReference>
<dbReference type="FunFam" id="2.30.30.30:FF:000001">
    <property type="entry name" value="50S ribosomal protein L2"/>
    <property type="match status" value="1"/>
</dbReference>
<dbReference type="FunFam" id="2.40.50.140:FF:000003">
    <property type="entry name" value="50S ribosomal protein L2"/>
    <property type="match status" value="1"/>
</dbReference>
<dbReference type="FunFam" id="4.10.950.10:FF:000001">
    <property type="entry name" value="50S ribosomal protein L2"/>
    <property type="match status" value="1"/>
</dbReference>
<dbReference type="Gene3D" id="2.30.30.30">
    <property type="match status" value="1"/>
</dbReference>
<dbReference type="Gene3D" id="2.40.50.140">
    <property type="entry name" value="Nucleic acid-binding proteins"/>
    <property type="match status" value="1"/>
</dbReference>
<dbReference type="Gene3D" id="4.10.950.10">
    <property type="entry name" value="Ribosomal protein L2, domain 3"/>
    <property type="match status" value="1"/>
</dbReference>
<dbReference type="HAMAP" id="MF_01320_B">
    <property type="entry name" value="Ribosomal_uL2_B"/>
    <property type="match status" value="1"/>
</dbReference>
<dbReference type="InterPro" id="IPR012340">
    <property type="entry name" value="NA-bd_OB-fold"/>
</dbReference>
<dbReference type="InterPro" id="IPR014722">
    <property type="entry name" value="Rib_uL2_dom2"/>
</dbReference>
<dbReference type="InterPro" id="IPR002171">
    <property type="entry name" value="Ribosomal_uL2"/>
</dbReference>
<dbReference type="InterPro" id="IPR005880">
    <property type="entry name" value="Ribosomal_uL2_bac/org-type"/>
</dbReference>
<dbReference type="InterPro" id="IPR022669">
    <property type="entry name" value="Ribosomal_uL2_C"/>
</dbReference>
<dbReference type="InterPro" id="IPR022671">
    <property type="entry name" value="Ribosomal_uL2_CS"/>
</dbReference>
<dbReference type="InterPro" id="IPR014726">
    <property type="entry name" value="Ribosomal_uL2_dom3"/>
</dbReference>
<dbReference type="InterPro" id="IPR022666">
    <property type="entry name" value="Ribosomal_uL2_RNA-bd_dom"/>
</dbReference>
<dbReference type="InterPro" id="IPR008991">
    <property type="entry name" value="Translation_prot_SH3-like_sf"/>
</dbReference>
<dbReference type="NCBIfam" id="TIGR01171">
    <property type="entry name" value="rplB_bact"/>
    <property type="match status" value="1"/>
</dbReference>
<dbReference type="PANTHER" id="PTHR13691:SF5">
    <property type="entry name" value="LARGE RIBOSOMAL SUBUNIT PROTEIN UL2M"/>
    <property type="match status" value="1"/>
</dbReference>
<dbReference type="PANTHER" id="PTHR13691">
    <property type="entry name" value="RIBOSOMAL PROTEIN L2"/>
    <property type="match status" value="1"/>
</dbReference>
<dbReference type="Pfam" id="PF00181">
    <property type="entry name" value="Ribosomal_L2"/>
    <property type="match status" value="1"/>
</dbReference>
<dbReference type="Pfam" id="PF03947">
    <property type="entry name" value="Ribosomal_L2_C"/>
    <property type="match status" value="1"/>
</dbReference>
<dbReference type="PIRSF" id="PIRSF002158">
    <property type="entry name" value="Ribosomal_L2"/>
    <property type="match status" value="1"/>
</dbReference>
<dbReference type="SMART" id="SM01383">
    <property type="entry name" value="Ribosomal_L2"/>
    <property type="match status" value="1"/>
</dbReference>
<dbReference type="SMART" id="SM01382">
    <property type="entry name" value="Ribosomal_L2_C"/>
    <property type="match status" value="1"/>
</dbReference>
<dbReference type="SUPFAM" id="SSF50249">
    <property type="entry name" value="Nucleic acid-binding proteins"/>
    <property type="match status" value="1"/>
</dbReference>
<dbReference type="SUPFAM" id="SSF50104">
    <property type="entry name" value="Translation proteins SH3-like domain"/>
    <property type="match status" value="1"/>
</dbReference>
<dbReference type="PROSITE" id="PS00467">
    <property type="entry name" value="RIBOSOMAL_L2"/>
    <property type="match status" value="1"/>
</dbReference>
<comment type="function">
    <text evidence="1">One of the primary rRNA binding proteins. Required for association of the 30S and 50S subunits to form the 70S ribosome, for tRNA binding and peptide bond formation. It has been suggested to have peptidyltransferase activity; this is somewhat controversial. Makes several contacts with the 16S rRNA in the 70S ribosome.</text>
</comment>
<comment type="subunit">
    <text evidence="1">Part of the 50S ribosomal subunit. Forms a bridge to the 30S subunit in the 70S ribosome.</text>
</comment>
<comment type="similarity">
    <text evidence="1">Belongs to the universal ribosomal protein uL2 family.</text>
</comment>
<protein>
    <recommendedName>
        <fullName evidence="1">Large ribosomal subunit protein uL2</fullName>
    </recommendedName>
    <alternativeName>
        <fullName evidence="3">50S ribosomal protein L2</fullName>
    </alternativeName>
</protein>
<feature type="chain" id="PRO_0000237201" description="Large ribosomal subunit protein uL2">
    <location>
        <begin position="1"/>
        <end position="279"/>
    </location>
</feature>
<feature type="region of interest" description="Disordered" evidence="2">
    <location>
        <begin position="29"/>
        <end position="53"/>
    </location>
</feature>
<feature type="region of interest" description="Disordered" evidence="2">
    <location>
        <begin position="224"/>
        <end position="279"/>
    </location>
</feature>
<feature type="compositionally biased region" description="Basic and acidic residues" evidence="2">
    <location>
        <begin position="253"/>
        <end position="268"/>
    </location>
</feature>
<feature type="compositionally biased region" description="Basic residues" evidence="2">
    <location>
        <begin position="269"/>
        <end position="279"/>
    </location>
</feature>
<evidence type="ECO:0000255" key="1">
    <source>
        <dbReference type="HAMAP-Rule" id="MF_01320"/>
    </source>
</evidence>
<evidence type="ECO:0000256" key="2">
    <source>
        <dbReference type="SAM" id="MobiDB-lite"/>
    </source>
</evidence>
<evidence type="ECO:0000305" key="3"/>
<accession>Q6ACZ8</accession>
<reference key="1">
    <citation type="journal article" date="2004" name="Mol. Plant Microbe Interact.">
        <title>The genome sequence of the Gram-positive sugarcane pathogen Leifsonia xyli subsp. xyli.</title>
        <authorList>
            <person name="Monteiro-Vitorello C.B."/>
            <person name="Camargo L.E.A."/>
            <person name="Van Sluys M.A."/>
            <person name="Kitajima J.P."/>
            <person name="Truffi D."/>
            <person name="do Amaral A.M."/>
            <person name="Harakava R."/>
            <person name="de Oliveira J.C.F."/>
            <person name="Wood D."/>
            <person name="de Oliveira M.C."/>
            <person name="Miyaki C.Y."/>
            <person name="Takita M.A."/>
            <person name="da Silva A.C.R."/>
            <person name="Furlan L.R."/>
            <person name="Carraro D.M."/>
            <person name="Camarotte G."/>
            <person name="Almeida N.F. Jr."/>
            <person name="Carrer H."/>
            <person name="Coutinho L.L."/>
            <person name="El-Dorry H.A."/>
            <person name="Ferro M.I.T."/>
            <person name="Gagliardi P.R."/>
            <person name="Giglioti E."/>
            <person name="Goldman M.H.S."/>
            <person name="Goldman G.H."/>
            <person name="Kimura E.T."/>
            <person name="Ferro E.S."/>
            <person name="Kuramae E.E."/>
            <person name="Lemos E.G.M."/>
            <person name="Lemos M.V.F."/>
            <person name="Mauro S.M.Z."/>
            <person name="Machado M.A."/>
            <person name="Marino C.L."/>
            <person name="Menck C.F."/>
            <person name="Nunes L.R."/>
            <person name="Oliveira R.C."/>
            <person name="Pereira G.G."/>
            <person name="Siqueira W."/>
            <person name="de Souza A.A."/>
            <person name="Tsai S.M."/>
            <person name="Zanca A.S."/>
            <person name="Simpson A.J.G."/>
            <person name="Brumbley S.M."/>
            <person name="Setubal J.C."/>
        </authorList>
    </citation>
    <scope>NUCLEOTIDE SEQUENCE [LARGE SCALE GENOMIC DNA]</scope>
    <source>
        <strain>CTCB07</strain>
    </source>
</reference>
<sequence length="279" mass="30287">MAIRNYKPTTPGRRGSSVADFAEITRSNPEKSLLRPLSKSGGRNNQGRITTRHIGGGHKRQYRVIDFRRNDKDGVNAKVAHIEYDPNRTARIALLHFLDGTKRYILAPAGLKQGNIVESGAGADIKPGNNLPLCNIPTGTVVHAIELKPGGGAKLARSAGSSVRLVAKDGPYAQLRLPSGEVRNVDARCRATIGEVGNAEQSNINWGKAGRMRWKGVRPTVRGVAMNPIDHPHGGGEGKTSGGRHPVSPWGQKEGRTRHPNKESDKLIVRRRNAGKKRK</sequence>